<keyword id="KW-0007">Acetylation</keyword>
<keyword id="KW-0131">Cell cycle</keyword>
<keyword id="KW-0132">Cell division</keyword>
<keyword id="KW-0175">Coiled coil</keyword>
<keyword id="KW-0963">Cytoplasm</keyword>
<keyword id="KW-0717">Septation</keyword>
<accession>Q0TAD6</accession>
<sequence length="81" mass="9635">MTMSLEVFEKLEAKVQQAIDTITLLQMEIEELKEKNNSLSQEVQNAQHQREELERENNHLKEQQNGWQERLQALLGRMEEV</sequence>
<evidence type="ECO:0000255" key="1">
    <source>
        <dbReference type="HAMAP-Rule" id="MF_01196"/>
    </source>
</evidence>
<evidence type="ECO:0000256" key="2">
    <source>
        <dbReference type="SAM" id="MobiDB-lite"/>
    </source>
</evidence>
<evidence type="ECO:0000305" key="3"/>
<organism>
    <name type="scientific">Escherichia coli O6:K15:H31 (strain 536 / UPEC)</name>
    <dbReference type="NCBI Taxonomy" id="362663"/>
    <lineage>
        <taxon>Bacteria</taxon>
        <taxon>Pseudomonadati</taxon>
        <taxon>Pseudomonadota</taxon>
        <taxon>Gammaproteobacteria</taxon>
        <taxon>Enterobacterales</taxon>
        <taxon>Enterobacteriaceae</taxon>
        <taxon>Escherichia</taxon>
    </lineage>
</organism>
<comment type="function">
    <text evidence="1">Non-essential, abundant cell division factor that is required for proper Z-ring formation. It is recruited early to the divisome by direct interaction with FtsZ, stimulating Z-ring assembly and thereby promoting cell division earlier in the cell cycle. Its recruitment to the Z-ring requires functional FtsA or ZipA.</text>
</comment>
<comment type="subunit">
    <text evidence="1">Homodimer. The ends of the coiled-coil dimer bind to each other, forming polymers. Interacts with FtsZ.</text>
</comment>
<comment type="subcellular location">
    <subcellularLocation>
        <location>Cytoplasm</location>
    </subcellularLocation>
    <text evidence="1">Localizes to the septum at mid-cell, in a FtsZ-like pattern.</text>
</comment>
<comment type="similarity">
    <text evidence="1">Belongs to the ZapB family.</text>
</comment>
<comment type="sequence caution" evidence="3">
    <conflict type="erroneous initiation">
        <sequence resource="EMBL-CDS" id="ABG72093"/>
    </conflict>
</comment>
<proteinExistence type="inferred from homology"/>
<feature type="chain" id="PRO_0000333901" description="Cell division protein ZapB">
    <location>
        <begin position="1"/>
        <end position="81"/>
    </location>
</feature>
<feature type="region of interest" description="Disordered" evidence="2">
    <location>
        <begin position="36"/>
        <end position="67"/>
    </location>
</feature>
<feature type="coiled-coil region" evidence="1">
    <location>
        <begin position="5"/>
        <end position="81"/>
    </location>
</feature>
<feature type="compositionally biased region" description="Polar residues" evidence="2">
    <location>
        <begin position="37"/>
        <end position="47"/>
    </location>
</feature>
<feature type="compositionally biased region" description="Basic and acidic residues" evidence="2">
    <location>
        <begin position="48"/>
        <end position="62"/>
    </location>
</feature>
<feature type="modified residue" description="N6-acetyllysine" evidence="1">
    <location>
        <position position="10"/>
    </location>
</feature>
<protein>
    <recommendedName>
        <fullName evidence="1">Cell division protein ZapB</fullName>
    </recommendedName>
</protein>
<name>ZAPB_ECOL5</name>
<reference key="1">
    <citation type="journal article" date="2006" name="Mol. Microbiol.">
        <title>Role of pathogenicity island-associated integrases in the genome plasticity of uropathogenic Escherichia coli strain 536.</title>
        <authorList>
            <person name="Hochhut B."/>
            <person name="Wilde C."/>
            <person name="Balling G."/>
            <person name="Middendorf B."/>
            <person name="Dobrindt U."/>
            <person name="Brzuszkiewicz E."/>
            <person name="Gottschalk G."/>
            <person name="Carniel E."/>
            <person name="Hacker J."/>
        </authorList>
    </citation>
    <scope>NUCLEOTIDE SEQUENCE [LARGE SCALE GENOMIC DNA]</scope>
    <source>
        <strain>536 / UPEC</strain>
    </source>
</reference>
<gene>
    <name evidence="1" type="primary">zapB</name>
    <name type="ordered locus">ECP_4137</name>
</gene>
<dbReference type="EMBL" id="CP000247">
    <property type="protein sequence ID" value="ABG72093.1"/>
    <property type="status" value="ALT_INIT"/>
    <property type="molecule type" value="Genomic_DNA"/>
</dbReference>
<dbReference type="RefSeq" id="WP_001296623.1">
    <property type="nucleotide sequence ID" value="NC_008253.1"/>
</dbReference>
<dbReference type="SMR" id="Q0TAD6"/>
<dbReference type="GeneID" id="93777970"/>
<dbReference type="KEGG" id="ecp:ECP_4137"/>
<dbReference type="HOGENOM" id="CLU_171174_2_0_6"/>
<dbReference type="Proteomes" id="UP000009182">
    <property type="component" value="Chromosome"/>
</dbReference>
<dbReference type="GO" id="GO:0005737">
    <property type="term" value="C:cytoplasm"/>
    <property type="evidence" value="ECO:0007669"/>
    <property type="project" value="UniProtKB-SubCell"/>
</dbReference>
<dbReference type="GO" id="GO:0000917">
    <property type="term" value="P:division septum assembly"/>
    <property type="evidence" value="ECO:0007669"/>
    <property type="project" value="UniProtKB-KW"/>
</dbReference>
<dbReference type="GO" id="GO:0043093">
    <property type="term" value="P:FtsZ-dependent cytokinesis"/>
    <property type="evidence" value="ECO:0007669"/>
    <property type="project" value="UniProtKB-UniRule"/>
</dbReference>
<dbReference type="FunFam" id="1.20.5.340:FF:000014">
    <property type="entry name" value="Cell division protein ZapB"/>
    <property type="match status" value="1"/>
</dbReference>
<dbReference type="Gene3D" id="1.20.5.340">
    <property type="match status" value="1"/>
</dbReference>
<dbReference type="HAMAP" id="MF_01196">
    <property type="entry name" value="ZapB"/>
    <property type="match status" value="1"/>
</dbReference>
<dbReference type="InterPro" id="IPR009252">
    <property type="entry name" value="Cell_div_ZapB"/>
</dbReference>
<dbReference type="NCBIfam" id="NF011951">
    <property type="entry name" value="PRK15422.1"/>
    <property type="match status" value="1"/>
</dbReference>
<dbReference type="Pfam" id="PF06005">
    <property type="entry name" value="ZapB"/>
    <property type="match status" value="1"/>
</dbReference>